<sequence>MFRNALRQSTRAVGAFSATGRVAARNAAPVVSAVQARTYADAKATPTEVSSILEQRIRGVQEESNLAETGRVLSVGDGIARVHGMANVQAEELVEFASGVKGMCMNLEAGQVGVVLFGSDRLVKEGETVKRTGEIVDVPVGPELLGRVIDALGNPIDGKGPINCKEKRRAQLKAPGILPRQSVNQPVQTGLKSVDAMVPIGRGQRELIIGDRQTGKTAVALDAILNQKRWNSGSDEDKKLYCVYVAVGQKRSTVAQLVKTLEENDAMKYSIVVAATASEAAPLQYLAPFTGACVGEYFRDNGKHSLVIFDDLTKQAVAYRQMSLLLRRPPGREAYPGDVFYLHSRLLERAAKMNKTHGGGSMTALPVIETQGGDVSAYIPTNVISITDGQIFLESELFYKGVRPAINVGLSVSRVGSAAQLKAMKQVAGSLKLFLAQYREVAAFAQFGSDLDAATKQTLNRGERLTELLKQKQYSPMAVNEMVPLIFAGVNGFLDSVPVAKILQWEADFLAHLKTNEPEIMATIDKEGAISKDLEAKLRDVIQTFTKSFLG</sequence>
<evidence type="ECO:0000250" key="1"/>
<evidence type="ECO:0000255" key="2"/>
<evidence type="ECO:0000305" key="3"/>
<proteinExistence type="inferred from homology"/>
<dbReference type="EMBL" id="M84191">
    <property type="protein sequence ID" value="AAA33560.1"/>
    <property type="molecule type" value="Genomic_DNA"/>
</dbReference>
<dbReference type="EMBL" id="CM002236">
    <property type="protein sequence ID" value="EAA36409.1"/>
    <property type="molecule type" value="Genomic_DNA"/>
</dbReference>
<dbReference type="PIR" id="JC1111">
    <property type="entry name" value="JC1111"/>
</dbReference>
<dbReference type="RefSeq" id="XP_965645.1">
    <property type="nucleotide sequence ID" value="XM_960552.3"/>
</dbReference>
<dbReference type="SMR" id="P37211"/>
<dbReference type="FunCoup" id="P37211">
    <property type="interactions" value="938"/>
</dbReference>
<dbReference type="STRING" id="367110.P37211"/>
<dbReference type="PaxDb" id="5141-EFNCRP00000001937"/>
<dbReference type="EnsemblFungi" id="EAA36409">
    <property type="protein sequence ID" value="EAA36409"/>
    <property type="gene ID" value="NCU02514"/>
</dbReference>
<dbReference type="GeneID" id="3881843"/>
<dbReference type="KEGG" id="ncr:NCU02514"/>
<dbReference type="VEuPathDB" id="FungiDB:NCU02514"/>
<dbReference type="HOGENOM" id="CLU_010091_2_1_1"/>
<dbReference type="InParanoid" id="P37211"/>
<dbReference type="OrthoDB" id="9805536at2759"/>
<dbReference type="Proteomes" id="UP000001805">
    <property type="component" value="Chromosome 1, Linkage Group I"/>
</dbReference>
<dbReference type="GO" id="GO:0005743">
    <property type="term" value="C:mitochondrial inner membrane"/>
    <property type="evidence" value="ECO:0007669"/>
    <property type="project" value="UniProtKB-SubCell"/>
</dbReference>
<dbReference type="GO" id="GO:0045259">
    <property type="term" value="C:proton-transporting ATP synthase complex"/>
    <property type="evidence" value="ECO:0007669"/>
    <property type="project" value="UniProtKB-KW"/>
</dbReference>
<dbReference type="GO" id="GO:0043531">
    <property type="term" value="F:ADP binding"/>
    <property type="evidence" value="ECO:0000318"/>
    <property type="project" value="GO_Central"/>
</dbReference>
<dbReference type="GO" id="GO:0005524">
    <property type="term" value="F:ATP binding"/>
    <property type="evidence" value="ECO:0000318"/>
    <property type="project" value="GO_Central"/>
</dbReference>
<dbReference type="GO" id="GO:0046933">
    <property type="term" value="F:proton-transporting ATP synthase activity, rotational mechanism"/>
    <property type="evidence" value="ECO:0007669"/>
    <property type="project" value="InterPro"/>
</dbReference>
<dbReference type="GO" id="GO:0015986">
    <property type="term" value="P:proton motive force-driven ATP synthesis"/>
    <property type="evidence" value="ECO:0000318"/>
    <property type="project" value="GO_Central"/>
</dbReference>
<dbReference type="CDD" id="cd18113">
    <property type="entry name" value="ATP-synt_F1_alpha_C"/>
    <property type="match status" value="1"/>
</dbReference>
<dbReference type="CDD" id="cd18116">
    <property type="entry name" value="ATP-synt_F1_alpha_N"/>
    <property type="match status" value="1"/>
</dbReference>
<dbReference type="CDD" id="cd01132">
    <property type="entry name" value="F1-ATPase_alpha_CD"/>
    <property type="match status" value="1"/>
</dbReference>
<dbReference type="FunFam" id="1.20.150.20:FF:000001">
    <property type="entry name" value="ATP synthase subunit alpha"/>
    <property type="match status" value="1"/>
</dbReference>
<dbReference type="FunFam" id="2.40.30.20:FF:000001">
    <property type="entry name" value="ATP synthase subunit alpha"/>
    <property type="match status" value="1"/>
</dbReference>
<dbReference type="FunFam" id="3.40.50.300:FF:004039">
    <property type="entry name" value="ATP synthase subunit alpha, mitochondrial"/>
    <property type="match status" value="1"/>
</dbReference>
<dbReference type="Gene3D" id="2.40.30.20">
    <property type="match status" value="1"/>
</dbReference>
<dbReference type="Gene3D" id="1.20.150.20">
    <property type="entry name" value="ATP synthase alpha/beta chain, C-terminal domain"/>
    <property type="match status" value="1"/>
</dbReference>
<dbReference type="Gene3D" id="3.40.50.300">
    <property type="entry name" value="P-loop containing nucleotide triphosphate hydrolases"/>
    <property type="match status" value="1"/>
</dbReference>
<dbReference type="HAMAP" id="MF_01346">
    <property type="entry name" value="ATP_synth_alpha_bact"/>
    <property type="match status" value="1"/>
</dbReference>
<dbReference type="InterPro" id="IPR023366">
    <property type="entry name" value="ATP_synth_asu-like_sf"/>
</dbReference>
<dbReference type="InterPro" id="IPR000793">
    <property type="entry name" value="ATP_synth_asu_C"/>
</dbReference>
<dbReference type="InterPro" id="IPR038376">
    <property type="entry name" value="ATP_synth_asu_C_sf"/>
</dbReference>
<dbReference type="InterPro" id="IPR033732">
    <property type="entry name" value="ATP_synth_F1_a_nt-bd_dom"/>
</dbReference>
<dbReference type="InterPro" id="IPR005294">
    <property type="entry name" value="ATP_synth_F1_asu"/>
</dbReference>
<dbReference type="InterPro" id="IPR020003">
    <property type="entry name" value="ATPase_a/bsu_AS"/>
</dbReference>
<dbReference type="InterPro" id="IPR004100">
    <property type="entry name" value="ATPase_F1/V1/A1_a/bsu_N"/>
</dbReference>
<dbReference type="InterPro" id="IPR036121">
    <property type="entry name" value="ATPase_F1/V1/A1_a/bsu_N_sf"/>
</dbReference>
<dbReference type="InterPro" id="IPR000194">
    <property type="entry name" value="ATPase_F1/V1/A1_a/bsu_nucl-bd"/>
</dbReference>
<dbReference type="InterPro" id="IPR027417">
    <property type="entry name" value="P-loop_NTPase"/>
</dbReference>
<dbReference type="NCBIfam" id="TIGR00962">
    <property type="entry name" value="atpA"/>
    <property type="match status" value="1"/>
</dbReference>
<dbReference type="NCBIfam" id="NF009884">
    <property type="entry name" value="PRK13343.1"/>
    <property type="match status" value="1"/>
</dbReference>
<dbReference type="PANTHER" id="PTHR48082">
    <property type="entry name" value="ATP SYNTHASE SUBUNIT ALPHA, MITOCHONDRIAL"/>
    <property type="match status" value="1"/>
</dbReference>
<dbReference type="PANTHER" id="PTHR48082:SF2">
    <property type="entry name" value="ATP SYNTHASE SUBUNIT ALPHA, MITOCHONDRIAL"/>
    <property type="match status" value="1"/>
</dbReference>
<dbReference type="Pfam" id="PF00006">
    <property type="entry name" value="ATP-synt_ab"/>
    <property type="match status" value="1"/>
</dbReference>
<dbReference type="Pfam" id="PF00306">
    <property type="entry name" value="ATP-synt_ab_C"/>
    <property type="match status" value="1"/>
</dbReference>
<dbReference type="Pfam" id="PF02874">
    <property type="entry name" value="ATP-synt_ab_N"/>
    <property type="match status" value="1"/>
</dbReference>
<dbReference type="PIRSF" id="PIRSF039088">
    <property type="entry name" value="F_ATPase_subunit_alpha"/>
    <property type="match status" value="1"/>
</dbReference>
<dbReference type="SUPFAM" id="SSF47917">
    <property type="entry name" value="C-terminal domain of alpha and beta subunits of F1 ATP synthase"/>
    <property type="match status" value="1"/>
</dbReference>
<dbReference type="SUPFAM" id="SSF50615">
    <property type="entry name" value="N-terminal domain of alpha and beta subunits of F1 ATP synthase"/>
    <property type="match status" value="1"/>
</dbReference>
<dbReference type="SUPFAM" id="SSF52540">
    <property type="entry name" value="P-loop containing nucleoside triphosphate hydrolases"/>
    <property type="match status" value="1"/>
</dbReference>
<dbReference type="PROSITE" id="PS00152">
    <property type="entry name" value="ATPASE_ALPHA_BETA"/>
    <property type="match status" value="1"/>
</dbReference>
<feature type="transit peptide" description="Mitochondrion" evidence="2">
    <location>
        <begin position="1"/>
        <end status="unknown"/>
    </location>
</feature>
<feature type="chain" id="PRO_0000002431" description="ATP synthase subunit alpha, mitochondrial">
    <location>
        <begin status="unknown"/>
        <end position="551"/>
    </location>
</feature>
<feature type="binding site" evidence="1">
    <location>
        <begin position="210"/>
        <end position="217"/>
    </location>
    <ligand>
        <name>ATP</name>
        <dbReference type="ChEBI" id="CHEBI:30616"/>
    </ligand>
</feature>
<feature type="site" description="Required for activity" evidence="1">
    <location>
        <position position="411"/>
    </location>
</feature>
<name>ATPA_NEUCR</name>
<comment type="function">
    <text evidence="1">Mitochondrial membrane ATP synthase (F(1)F(0) ATP synthase or Complex V) produces ATP from ADP in the presence of a proton gradient across the membrane which is generated by electron transport complexes of the respiratory chain. F-type ATPases consist of two structural domains, F(1) - containing the extramembraneous catalytic core, and F(0) - containing the membrane proton channel, linked together by a central stalk and a peripheral stalk. During catalysis, ATP synthesis in the catalytic domain of F(1) is coupled via a rotary mechanism of the central stalk subunits to proton translocation. Subunits alpha and beta form the catalytic core in F(1). Rotation of the central stalk against the surrounding alpha(3)beta(3) subunits leads to hydrolysis of ATP in three separate catalytic sites on the beta subunits. Subunit alpha does not bear the catalytic high-affinity ATP-binding sites (By similarity).</text>
</comment>
<comment type="subunit">
    <text>F-type ATPases have 2 components, CF(1) - the catalytic core - and CF(0) - the membrane proton channel. CF(1) has five subunits: alpha(3), beta(3), gamma(1), delta(1), epsilon(1). CF(0) has three main subunits: a, b and c.</text>
</comment>
<comment type="subcellular location">
    <subcellularLocation>
        <location>Mitochondrion</location>
    </subcellularLocation>
    <subcellularLocation>
        <location>Mitochondrion inner membrane</location>
    </subcellularLocation>
    <text>Peripheral membrane protein.</text>
</comment>
<comment type="similarity">
    <text evidence="3">Belongs to the ATPase alpha/beta chains family.</text>
</comment>
<protein>
    <recommendedName>
        <fullName>ATP synthase subunit alpha, mitochondrial</fullName>
    </recommendedName>
</protein>
<reference key="1">
    <citation type="journal article" date="1992" name="Gene">
        <title>Structures of the genes encoding the alpha and beta subunits of the Neurospora crassa mitochondrial ATP synthase.</title>
        <authorList>
            <person name="Bowman E.J."/>
            <person name="Knock T.E."/>
        </authorList>
    </citation>
    <scope>NUCLEOTIDE SEQUENCE [GENOMIC DNA]</scope>
</reference>
<reference key="2">
    <citation type="journal article" date="2003" name="Nature">
        <title>The genome sequence of the filamentous fungus Neurospora crassa.</title>
        <authorList>
            <person name="Galagan J.E."/>
            <person name="Calvo S.E."/>
            <person name="Borkovich K.A."/>
            <person name="Selker E.U."/>
            <person name="Read N.D."/>
            <person name="Jaffe D.B."/>
            <person name="FitzHugh W."/>
            <person name="Ma L.-J."/>
            <person name="Smirnov S."/>
            <person name="Purcell S."/>
            <person name="Rehman B."/>
            <person name="Elkins T."/>
            <person name="Engels R."/>
            <person name="Wang S."/>
            <person name="Nielsen C.B."/>
            <person name="Butler J."/>
            <person name="Endrizzi M."/>
            <person name="Qui D."/>
            <person name="Ianakiev P."/>
            <person name="Bell-Pedersen D."/>
            <person name="Nelson M.A."/>
            <person name="Werner-Washburne M."/>
            <person name="Selitrennikoff C.P."/>
            <person name="Kinsey J.A."/>
            <person name="Braun E.L."/>
            <person name="Zelter A."/>
            <person name="Schulte U."/>
            <person name="Kothe G.O."/>
            <person name="Jedd G."/>
            <person name="Mewes H.-W."/>
            <person name="Staben C."/>
            <person name="Marcotte E."/>
            <person name="Greenberg D."/>
            <person name="Roy A."/>
            <person name="Foley K."/>
            <person name="Naylor J."/>
            <person name="Stange-Thomann N."/>
            <person name="Barrett R."/>
            <person name="Gnerre S."/>
            <person name="Kamal M."/>
            <person name="Kamvysselis M."/>
            <person name="Mauceli E.W."/>
            <person name="Bielke C."/>
            <person name="Rudd S."/>
            <person name="Frishman D."/>
            <person name="Krystofova S."/>
            <person name="Rasmussen C."/>
            <person name="Metzenberg R.L."/>
            <person name="Perkins D.D."/>
            <person name="Kroken S."/>
            <person name="Cogoni C."/>
            <person name="Macino G."/>
            <person name="Catcheside D.E.A."/>
            <person name="Li W."/>
            <person name="Pratt R.J."/>
            <person name="Osmani S.A."/>
            <person name="DeSouza C.P.C."/>
            <person name="Glass N.L."/>
            <person name="Orbach M.J."/>
            <person name="Berglund J.A."/>
            <person name="Voelker R."/>
            <person name="Yarden O."/>
            <person name="Plamann M."/>
            <person name="Seiler S."/>
            <person name="Dunlap J.C."/>
            <person name="Radford A."/>
            <person name="Aramayo R."/>
            <person name="Natvig D.O."/>
            <person name="Alex L.A."/>
            <person name="Mannhaupt G."/>
            <person name="Ebbole D.J."/>
            <person name="Freitag M."/>
            <person name="Paulsen I."/>
            <person name="Sachs M.S."/>
            <person name="Lander E.S."/>
            <person name="Nusbaum C."/>
            <person name="Birren B.W."/>
        </authorList>
    </citation>
    <scope>NUCLEOTIDE SEQUENCE [LARGE SCALE GENOMIC DNA]</scope>
    <source>
        <strain>ATCC 24698 / 74-OR23-1A / CBS 708.71 / DSM 1257 / FGSC 987</strain>
    </source>
</reference>
<organism>
    <name type="scientific">Neurospora crassa (strain ATCC 24698 / 74-OR23-1A / CBS 708.71 / DSM 1257 / FGSC 987)</name>
    <dbReference type="NCBI Taxonomy" id="367110"/>
    <lineage>
        <taxon>Eukaryota</taxon>
        <taxon>Fungi</taxon>
        <taxon>Dikarya</taxon>
        <taxon>Ascomycota</taxon>
        <taxon>Pezizomycotina</taxon>
        <taxon>Sordariomycetes</taxon>
        <taxon>Sordariomycetidae</taxon>
        <taxon>Sordariales</taxon>
        <taxon>Sordariaceae</taxon>
        <taxon>Neurospora</taxon>
    </lineage>
</organism>
<gene>
    <name type="primary">atp-1</name>
    <name type="ORF">NCU02514</name>
</gene>
<accession>P37211</accession>
<accession>Q7RVM9</accession>
<keyword id="KW-0066">ATP synthesis</keyword>
<keyword id="KW-0067">ATP-binding</keyword>
<keyword id="KW-0139">CF(1)</keyword>
<keyword id="KW-0375">Hydrogen ion transport</keyword>
<keyword id="KW-0406">Ion transport</keyword>
<keyword id="KW-0472">Membrane</keyword>
<keyword id="KW-0496">Mitochondrion</keyword>
<keyword id="KW-0999">Mitochondrion inner membrane</keyword>
<keyword id="KW-0547">Nucleotide-binding</keyword>
<keyword id="KW-1185">Reference proteome</keyword>
<keyword id="KW-0809">Transit peptide</keyword>
<keyword id="KW-0813">Transport</keyword>